<name>OBG_STRPM</name>
<sequence length="437" mass="48350">MSMFLDTAKISVQAGRGGDGMVAFRREKYVPNGGPWGGDGGKGGSVIFRVNEGLRTLMDFRYNRKFKAKSGEKGMTKGMHGRGAEDLIVFVPQGTTVRDAETGKVITDLVEHGQEVVIAKGGRGGRGNIRFATPRNPAPEIAENGEPGEERQLELELKILADVGLVGFPSVGKSTLLSVVSSAKPKIGAYHFTTIVPNLGMVRTKSGDSFAMADLPGLIEGASQGVGLGTQFLRHIERTRVILHVIDMSASEGRDPYEDYVSINNELETYNLRLMERPQIIVANKMDMPEAQENLKAFKKKLAAQYDEFDDLPMIFPISSLAHQGLENLLEATAELLAKTDEFLLYDESDLVDEEAYYGFAEAEKEFEITRDDDATWVLSGEKLERLFVMTNMERDESIMKFARQLRGMGVDEALRERGAKDGDLVRIGKFEFEFVD</sequence>
<comment type="function">
    <text evidence="1">An essential GTPase which binds GTP, GDP and possibly (p)ppGpp with moderate affinity, with high nucleotide exchange rates and a fairly low GTP hydrolysis rate. Plays a role in control of the cell cycle, stress response, ribosome biogenesis and in those bacteria that undergo differentiation, in morphogenesis control.</text>
</comment>
<comment type="cofactor">
    <cofactor evidence="1">
        <name>Mg(2+)</name>
        <dbReference type="ChEBI" id="CHEBI:18420"/>
    </cofactor>
</comment>
<comment type="subunit">
    <text evidence="1">Monomer.</text>
</comment>
<comment type="subcellular location">
    <subcellularLocation>
        <location evidence="1">Cytoplasm</location>
    </subcellularLocation>
</comment>
<comment type="similarity">
    <text evidence="1">Belongs to the TRAFAC class OBG-HflX-like GTPase superfamily. OBG GTPase family.</text>
</comment>
<evidence type="ECO:0000255" key="1">
    <source>
        <dbReference type="HAMAP-Rule" id="MF_01454"/>
    </source>
</evidence>
<evidence type="ECO:0000255" key="2">
    <source>
        <dbReference type="PROSITE-ProRule" id="PRU01229"/>
    </source>
</evidence>
<evidence type="ECO:0000255" key="3">
    <source>
        <dbReference type="PROSITE-ProRule" id="PRU01231"/>
    </source>
</evidence>
<gene>
    <name evidence="1" type="primary">obg</name>
    <name type="ordered locus">M28_Spy1069</name>
</gene>
<keyword id="KW-0963">Cytoplasm</keyword>
<keyword id="KW-0342">GTP-binding</keyword>
<keyword id="KW-0378">Hydrolase</keyword>
<keyword id="KW-0460">Magnesium</keyword>
<keyword id="KW-0479">Metal-binding</keyword>
<keyword id="KW-0547">Nucleotide-binding</keyword>
<proteinExistence type="inferred from homology"/>
<feature type="chain" id="PRO_0000386309" description="GTPase Obg">
    <location>
        <begin position="1"/>
        <end position="437"/>
    </location>
</feature>
<feature type="domain" description="Obg" evidence="3">
    <location>
        <begin position="2"/>
        <end position="160"/>
    </location>
</feature>
<feature type="domain" description="OBG-type G" evidence="1">
    <location>
        <begin position="161"/>
        <end position="338"/>
    </location>
</feature>
<feature type="domain" description="OCT" evidence="2">
    <location>
        <begin position="359"/>
        <end position="437"/>
    </location>
</feature>
<feature type="binding site" evidence="1">
    <location>
        <begin position="167"/>
        <end position="174"/>
    </location>
    <ligand>
        <name>GTP</name>
        <dbReference type="ChEBI" id="CHEBI:37565"/>
    </ligand>
</feature>
<feature type="binding site" evidence="1">
    <location>
        <position position="174"/>
    </location>
    <ligand>
        <name>Mg(2+)</name>
        <dbReference type="ChEBI" id="CHEBI:18420"/>
    </ligand>
</feature>
<feature type="binding site" evidence="1">
    <location>
        <begin position="192"/>
        <end position="196"/>
    </location>
    <ligand>
        <name>GTP</name>
        <dbReference type="ChEBI" id="CHEBI:37565"/>
    </ligand>
</feature>
<feature type="binding site" evidence="1">
    <location>
        <position position="194"/>
    </location>
    <ligand>
        <name>Mg(2+)</name>
        <dbReference type="ChEBI" id="CHEBI:18420"/>
    </ligand>
</feature>
<feature type="binding site" evidence="1">
    <location>
        <begin position="214"/>
        <end position="217"/>
    </location>
    <ligand>
        <name>GTP</name>
        <dbReference type="ChEBI" id="CHEBI:37565"/>
    </ligand>
</feature>
<feature type="binding site" evidence="1">
    <location>
        <begin position="284"/>
        <end position="287"/>
    </location>
    <ligand>
        <name>GTP</name>
        <dbReference type="ChEBI" id="CHEBI:37565"/>
    </ligand>
</feature>
<feature type="binding site" evidence="1">
    <location>
        <begin position="319"/>
        <end position="321"/>
    </location>
    <ligand>
        <name>GTP</name>
        <dbReference type="ChEBI" id="CHEBI:37565"/>
    </ligand>
</feature>
<accession>Q48SX8</accession>
<dbReference type="EC" id="3.6.5.-" evidence="1"/>
<dbReference type="EMBL" id="CP000056">
    <property type="protein sequence ID" value="AAX72182.1"/>
    <property type="molecule type" value="Genomic_DNA"/>
</dbReference>
<dbReference type="RefSeq" id="WP_021340807.1">
    <property type="nucleotide sequence ID" value="NC_007296.2"/>
</dbReference>
<dbReference type="SMR" id="Q48SX8"/>
<dbReference type="KEGG" id="spb:M28_Spy1069"/>
<dbReference type="HOGENOM" id="CLU_011747_2_1_9"/>
<dbReference type="GO" id="GO:0005737">
    <property type="term" value="C:cytoplasm"/>
    <property type="evidence" value="ECO:0007669"/>
    <property type="project" value="UniProtKB-SubCell"/>
</dbReference>
<dbReference type="GO" id="GO:0005525">
    <property type="term" value="F:GTP binding"/>
    <property type="evidence" value="ECO:0007669"/>
    <property type="project" value="UniProtKB-UniRule"/>
</dbReference>
<dbReference type="GO" id="GO:0003924">
    <property type="term" value="F:GTPase activity"/>
    <property type="evidence" value="ECO:0007669"/>
    <property type="project" value="UniProtKB-UniRule"/>
</dbReference>
<dbReference type="GO" id="GO:0000287">
    <property type="term" value="F:magnesium ion binding"/>
    <property type="evidence" value="ECO:0007669"/>
    <property type="project" value="InterPro"/>
</dbReference>
<dbReference type="GO" id="GO:0042254">
    <property type="term" value="P:ribosome biogenesis"/>
    <property type="evidence" value="ECO:0007669"/>
    <property type="project" value="UniProtKB-UniRule"/>
</dbReference>
<dbReference type="CDD" id="cd01898">
    <property type="entry name" value="Obg"/>
    <property type="match status" value="1"/>
</dbReference>
<dbReference type="FunFam" id="2.70.210.12:FF:000001">
    <property type="entry name" value="GTPase Obg"/>
    <property type="match status" value="1"/>
</dbReference>
<dbReference type="FunFam" id="3.40.50.300:FF:000515">
    <property type="entry name" value="GTPase Obg"/>
    <property type="match status" value="1"/>
</dbReference>
<dbReference type="Gene3D" id="3.30.300.350">
    <property type="entry name" value="GTP-binding protein OBG, C-terminal domain"/>
    <property type="match status" value="1"/>
</dbReference>
<dbReference type="Gene3D" id="2.70.210.12">
    <property type="entry name" value="GTP1/OBG domain"/>
    <property type="match status" value="1"/>
</dbReference>
<dbReference type="Gene3D" id="3.40.50.300">
    <property type="entry name" value="P-loop containing nucleotide triphosphate hydrolases"/>
    <property type="match status" value="1"/>
</dbReference>
<dbReference type="HAMAP" id="MF_01454">
    <property type="entry name" value="GTPase_Obg"/>
    <property type="match status" value="1"/>
</dbReference>
<dbReference type="InterPro" id="IPR031167">
    <property type="entry name" value="G_OBG"/>
</dbReference>
<dbReference type="InterPro" id="IPR006073">
    <property type="entry name" value="GTP-bd"/>
</dbReference>
<dbReference type="InterPro" id="IPR014100">
    <property type="entry name" value="GTP-bd_Obg/CgtA"/>
</dbReference>
<dbReference type="InterPro" id="IPR036346">
    <property type="entry name" value="GTP-bd_prot_GTP1/OBG_C_sf"/>
</dbReference>
<dbReference type="InterPro" id="IPR006074">
    <property type="entry name" value="GTP1-OBG_CS"/>
</dbReference>
<dbReference type="InterPro" id="IPR006169">
    <property type="entry name" value="GTP1_OBG_dom"/>
</dbReference>
<dbReference type="InterPro" id="IPR036726">
    <property type="entry name" value="GTP1_OBG_dom_sf"/>
</dbReference>
<dbReference type="InterPro" id="IPR045086">
    <property type="entry name" value="OBG_GTPase"/>
</dbReference>
<dbReference type="InterPro" id="IPR015349">
    <property type="entry name" value="OCT_dom"/>
</dbReference>
<dbReference type="InterPro" id="IPR027417">
    <property type="entry name" value="P-loop_NTPase"/>
</dbReference>
<dbReference type="InterPro" id="IPR005225">
    <property type="entry name" value="Small_GTP-bd"/>
</dbReference>
<dbReference type="NCBIfam" id="TIGR02729">
    <property type="entry name" value="Obg_CgtA"/>
    <property type="match status" value="1"/>
</dbReference>
<dbReference type="NCBIfam" id="TIGR03595">
    <property type="entry name" value="Obg_CgtA_exten"/>
    <property type="match status" value="1"/>
</dbReference>
<dbReference type="NCBIfam" id="NF008954">
    <property type="entry name" value="PRK12296.1"/>
    <property type="match status" value="1"/>
</dbReference>
<dbReference type="NCBIfam" id="NF008955">
    <property type="entry name" value="PRK12297.1"/>
    <property type="match status" value="1"/>
</dbReference>
<dbReference type="NCBIfam" id="NF008956">
    <property type="entry name" value="PRK12299.1"/>
    <property type="match status" value="1"/>
</dbReference>
<dbReference type="NCBIfam" id="TIGR00231">
    <property type="entry name" value="small_GTP"/>
    <property type="match status" value="1"/>
</dbReference>
<dbReference type="PANTHER" id="PTHR11702">
    <property type="entry name" value="DEVELOPMENTALLY REGULATED GTP-BINDING PROTEIN-RELATED"/>
    <property type="match status" value="1"/>
</dbReference>
<dbReference type="PANTHER" id="PTHR11702:SF31">
    <property type="entry name" value="MITOCHONDRIAL RIBOSOME-ASSOCIATED GTPASE 2"/>
    <property type="match status" value="1"/>
</dbReference>
<dbReference type="Pfam" id="PF09269">
    <property type="entry name" value="DUF1967"/>
    <property type="match status" value="1"/>
</dbReference>
<dbReference type="Pfam" id="PF01018">
    <property type="entry name" value="GTP1_OBG"/>
    <property type="match status" value="1"/>
</dbReference>
<dbReference type="Pfam" id="PF01926">
    <property type="entry name" value="MMR_HSR1"/>
    <property type="match status" value="1"/>
</dbReference>
<dbReference type="PIRSF" id="PIRSF002401">
    <property type="entry name" value="GTP_bd_Obg/CgtA"/>
    <property type="match status" value="1"/>
</dbReference>
<dbReference type="PRINTS" id="PR00326">
    <property type="entry name" value="GTP1OBG"/>
</dbReference>
<dbReference type="SUPFAM" id="SSF102741">
    <property type="entry name" value="Obg GTP-binding protein C-terminal domain"/>
    <property type="match status" value="1"/>
</dbReference>
<dbReference type="SUPFAM" id="SSF82051">
    <property type="entry name" value="Obg GTP-binding protein N-terminal domain"/>
    <property type="match status" value="1"/>
</dbReference>
<dbReference type="SUPFAM" id="SSF52540">
    <property type="entry name" value="P-loop containing nucleoside triphosphate hydrolases"/>
    <property type="match status" value="1"/>
</dbReference>
<dbReference type="PROSITE" id="PS51710">
    <property type="entry name" value="G_OBG"/>
    <property type="match status" value="1"/>
</dbReference>
<dbReference type="PROSITE" id="PS00905">
    <property type="entry name" value="GTP1_OBG"/>
    <property type="match status" value="1"/>
</dbReference>
<dbReference type="PROSITE" id="PS51883">
    <property type="entry name" value="OBG"/>
    <property type="match status" value="1"/>
</dbReference>
<dbReference type="PROSITE" id="PS51881">
    <property type="entry name" value="OCT"/>
    <property type="match status" value="1"/>
</dbReference>
<organism>
    <name type="scientific">Streptococcus pyogenes serotype M28 (strain MGAS6180)</name>
    <dbReference type="NCBI Taxonomy" id="319701"/>
    <lineage>
        <taxon>Bacteria</taxon>
        <taxon>Bacillati</taxon>
        <taxon>Bacillota</taxon>
        <taxon>Bacilli</taxon>
        <taxon>Lactobacillales</taxon>
        <taxon>Streptococcaceae</taxon>
        <taxon>Streptococcus</taxon>
    </lineage>
</organism>
<reference key="1">
    <citation type="journal article" date="2005" name="J. Infect. Dis.">
        <title>Genome sequence of a serotype M28 strain of group A Streptococcus: potential new insights into puerperal sepsis and bacterial disease specificity.</title>
        <authorList>
            <person name="Green N.M."/>
            <person name="Zhang S."/>
            <person name="Porcella S.F."/>
            <person name="Nagiec M.J."/>
            <person name="Barbian K.D."/>
            <person name="Beres S.B."/>
            <person name="Lefebvre R.B."/>
            <person name="Musser J.M."/>
        </authorList>
    </citation>
    <scope>NUCLEOTIDE SEQUENCE [LARGE SCALE GENOMIC DNA]</scope>
    <source>
        <strain>MGAS6180</strain>
    </source>
</reference>
<protein>
    <recommendedName>
        <fullName evidence="1">GTPase Obg</fullName>
        <ecNumber evidence="1">3.6.5.-</ecNumber>
    </recommendedName>
    <alternativeName>
        <fullName evidence="1">GTP-binding protein Obg</fullName>
    </alternativeName>
</protein>